<evidence type="ECO:0000255" key="1">
    <source>
        <dbReference type="HAMAP-Rule" id="MF_01033"/>
    </source>
</evidence>
<comment type="function">
    <text evidence="1">Catalyzes the oxidation of 3-carboxy-2-hydroxy-4-methylpentanoate (3-isopropylmalate) to 3-carboxy-4-methyl-2-oxopentanoate. The product decarboxylates to 4-methyl-2 oxopentanoate.</text>
</comment>
<comment type="catalytic activity">
    <reaction evidence="1">
        <text>(2R,3S)-3-isopropylmalate + NAD(+) = 4-methyl-2-oxopentanoate + CO2 + NADH</text>
        <dbReference type="Rhea" id="RHEA:32271"/>
        <dbReference type="ChEBI" id="CHEBI:16526"/>
        <dbReference type="ChEBI" id="CHEBI:17865"/>
        <dbReference type="ChEBI" id="CHEBI:35121"/>
        <dbReference type="ChEBI" id="CHEBI:57540"/>
        <dbReference type="ChEBI" id="CHEBI:57945"/>
        <dbReference type="EC" id="1.1.1.85"/>
    </reaction>
</comment>
<comment type="cofactor">
    <cofactor evidence="1">
        <name>Mg(2+)</name>
        <dbReference type="ChEBI" id="CHEBI:18420"/>
    </cofactor>
    <cofactor evidence="1">
        <name>Mn(2+)</name>
        <dbReference type="ChEBI" id="CHEBI:29035"/>
    </cofactor>
    <text evidence="1">Binds 1 Mg(2+) or Mn(2+) ion per subunit.</text>
</comment>
<comment type="pathway">
    <text evidence="1">Amino-acid biosynthesis; L-leucine biosynthesis; L-leucine from 3-methyl-2-oxobutanoate: step 3/4.</text>
</comment>
<comment type="subunit">
    <text evidence="1">Homodimer.</text>
</comment>
<comment type="subcellular location">
    <subcellularLocation>
        <location evidence="1">Cytoplasm</location>
    </subcellularLocation>
</comment>
<comment type="similarity">
    <text evidence="1">Belongs to the isocitrate and isopropylmalate dehydrogenases family. LeuB type 1 subfamily.</text>
</comment>
<name>LEU32_BRADU</name>
<feature type="chain" id="PRO_0000083652" description="3-isopropylmalate dehydrogenase 2">
    <location>
        <begin position="1"/>
        <end position="370"/>
    </location>
</feature>
<feature type="binding site" evidence="1">
    <location>
        <begin position="77"/>
        <end position="90"/>
    </location>
    <ligand>
        <name>NAD(+)</name>
        <dbReference type="ChEBI" id="CHEBI:57540"/>
    </ligand>
</feature>
<feature type="binding site" evidence="1">
    <location>
        <position position="97"/>
    </location>
    <ligand>
        <name>substrate</name>
    </ligand>
</feature>
<feature type="binding site" evidence="1">
    <location>
        <position position="107"/>
    </location>
    <ligand>
        <name>substrate</name>
    </ligand>
</feature>
<feature type="binding site" evidence="1">
    <location>
        <position position="135"/>
    </location>
    <ligand>
        <name>substrate</name>
    </ligand>
</feature>
<feature type="binding site" evidence="1">
    <location>
        <position position="226"/>
    </location>
    <ligand>
        <name>Mg(2+)</name>
        <dbReference type="ChEBI" id="CHEBI:18420"/>
    </ligand>
</feature>
<feature type="binding site" evidence="1">
    <location>
        <position position="226"/>
    </location>
    <ligand>
        <name>substrate</name>
    </ligand>
</feature>
<feature type="binding site" evidence="1">
    <location>
        <position position="250"/>
    </location>
    <ligand>
        <name>Mg(2+)</name>
        <dbReference type="ChEBI" id="CHEBI:18420"/>
    </ligand>
</feature>
<feature type="binding site" evidence="1">
    <location>
        <position position="254"/>
    </location>
    <ligand>
        <name>Mg(2+)</name>
        <dbReference type="ChEBI" id="CHEBI:18420"/>
    </ligand>
</feature>
<feature type="binding site" evidence="1">
    <location>
        <begin position="290"/>
        <end position="302"/>
    </location>
    <ligand>
        <name>NAD(+)</name>
        <dbReference type="ChEBI" id="CHEBI:57540"/>
    </ligand>
</feature>
<feature type="site" description="Important for catalysis" evidence="1">
    <location>
        <position position="142"/>
    </location>
</feature>
<feature type="site" description="Important for catalysis" evidence="1">
    <location>
        <position position="193"/>
    </location>
</feature>
<keyword id="KW-0028">Amino-acid biosynthesis</keyword>
<keyword id="KW-0100">Branched-chain amino acid biosynthesis</keyword>
<keyword id="KW-0963">Cytoplasm</keyword>
<keyword id="KW-0432">Leucine biosynthesis</keyword>
<keyword id="KW-0460">Magnesium</keyword>
<keyword id="KW-0464">Manganese</keyword>
<keyword id="KW-0479">Metal-binding</keyword>
<keyword id="KW-0520">NAD</keyword>
<keyword id="KW-0560">Oxidoreductase</keyword>
<keyword id="KW-1185">Reference proteome</keyword>
<sequence>MATHKLLLLPGDGIGPEVMGEVKRLIDWLNSAGIAKFETDTGLVGGSAYDAHKVSISEGDMAKALAADAIIFGAVGGPKWDAVPYEVRPEAGLLRLRKDLGLFANLRPAVCYPALADASSLKREAVEGLDIMIVRELTGGVYFGEPKTITDLGNGQKRAIDTQVYDTYEIERIARVAFDLAKKRKNKVTSMEKRNVMKSGVLWNEVVTQVHKREYPDVTLEHQLADSGGMMLVKWPKQFDVIVTDNLFGDMLSDIAAMLTGSLGMLPSASLGEVDVKSKKRKALYEPVHGSAPDIAGKGLANPIAMISSFGMALRYSFDMGALADKVDAAIAAVLASGLRTADIKSEGTTAASTTQMGEAILKELQKLHA</sequence>
<reference key="1">
    <citation type="journal article" date="2002" name="DNA Res.">
        <title>Complete genomic sequence of nitrogen-fixing symbiotic bacterium Bradyrhizobium japonicum USDA110.</title>
        <authorList>
            <person name="Kaneko T."/>
            <person name="Nakamura Y."/>
            <person name="Sato S."/>
            <person name="Minamisawa K."/>
            <person name="Uchiumi T."/>
            <person name="Sasamoto S."/>
            <person name="Watanabe A."/>
            <person name="Idesawa K."/>
            <person name="Iriguchi M."/>
            <person name="Kawashima K."/>
            <person name="Kohara M."/>
            <person name="Matsumoto M."/>
            <person name="Shimpo S."/>
            <person name="Tsuruoka H."/>
            <person name="Wada T."/>
            <person name="Yamada M."/>
            <person name="Tabata S."/>
        </authorList>
    </citation>
    <scope>NUCLEOTIDE SEQUENCE [LARGE SCALE GENOMIC DNA]</scope>
    <source>
        <strain>JCM 10833 / BCRC 13528 / IAM 13628 / NBRC 14792 / USDA 110</strain>
    </source>
</reference>
<organism>
    <name type="scientific">Bradyrhizobium diazoefficiens (strain JCM 10833 / BCRC 13528 / IAM 13628 / NBRC 14792 / USDA 110)</name>
    <dbReference type="NCBI Taxonomy" id="224911"/>
    <lineage>
        <taxon>Bacteria</taxon>
        <taxon>Pseudomonadati</taxon>
        <taxon>Pseudomonadota</taxon>
        <taxon>Alphaproteobacteria</taxon>
        <taxon>Hyphomicrobiales</taxon>
        <taxon>Nitrobacteraceae</taxon>
        <taxon>Bradyrhizobium</taxon>
    </lineage>
</organism>
<dbReference type="EC" id="1.1.1.85" evidence="1"/>
<dbReference type="EMBL" id="BA000040">
    <property type="protein sequence ID" value="BAC45768.1"/>
    <property type="molecule type" value="Genomic_DNA"/>
</dbReference>
<dbReference type="RefSeq" id="NP_767143.1">
    <property type="nucleotide sequence ID" value="NC_004463.1"/>
</dbReference>
<dbReference type="RefSeq" id="WP_011083334.1">
    <property type="nucleotide sequence ID" value="NC_004463.1"/>
</dbReference>
<dbReference type="SMR" id="Q89X19"/>
<dbReference type="FunCoup" id="Q89X19">
    <property type="interactions" value="596"/>
</dbReference>
<dbReference type="STRING" id="224911.AAV28_41780"/>
<dbReference type="EnsemblBacteria" id="BAC45768">
    <property type="protein sequence ID" value="BAC45768"/>
    <property type="gene ID" value="BAC45768"/>
</dbReference>
<dbReference type="GeneID" id="46495649"/>
<dbReference type="KEGG" id="bja:bll0504"/>
<dbReference type="PATRIC" id="fig|224911.44.peg.9040"/>
<dbReference type="eggNOG" id="COG0473">
    <property type="taxonomic scope" value="Bacteria"/>
</dbReference>
<dbReference type="HOGENOM" id="CLU_031953_0_3_5"/>
<dbReference type="InParanoid" id="Q89X19"/>
<dbReference type="OrthoDB" id="9767905at2"/>
<dbReference type="PhylomeDB" id="Q89X19"/>
<dbReference type="UniPathway" id="UPA00048">
    <property type="reaction ID" value="UER00072"/>
</dbReference>
<dbReference type="Proteomes" id="UP000002526">
    <property type="component" value="Chromosome"/>
</dbReference>
<dbReference type="GO" id="GO:0005829">
    <property type="term" value="C:cytosol"/>
    <property type="evidence" value="ECO:0000318"/>
    <property type="project" value="GO_Central"/>
</dbReference>
<dbReference type="GO" id="GO:0003862">
    <property type="term" value="F:3-isopropylmalate dehydrogenase activity"/>
    <property type="evidence" value="ECO:0000318"/>
    <property type="project" value="GO_Central"/>
</dbReference>
<dbReference type="GO" id="GO:0000287">
    <property type="term" value="F:magnesium ion binding"/>
    <property type="evidence" value="ECO:0007669"/>
    <property type="project" value="InterPro"/>
</dbReference>
<dbReference type="GO" id="GO:0051287">
    <property type="term" value="F:NAD binding"/>
    <property type="evidence" value="ECO:0007669"/>
    <property type="project" value="InterPro"/>
</dbReference>
<dbReference type="GO" id="GO:0009098">
    <property type="term" value="P:L-leucine biosynthetic process"/>
    <property type="evidence" value="ECO:0000318"/>
    <property type="project" value="GO_Central"/>
</dbReference>
<dbReference type="FunFam" id="3.40.718.10:FF:000006">
    <property type="entry name" value="3-isopropylmalate dehydrogenase"/>
    <property type="match status" value="1"/>
</dbReference>
<dbReference type="Gene3D" id="3.40.718.10">
    <property type="entry name" value="Isopropylmalate Dehydrogenase"/>
    <property type="match status" value="1"/>
</dbReference>
<dbReference type="HAMAP" id="MF_01033">
    <property type="entry name" value="LeuB_type1"/>
    <property type="match status" value="1"/>
</dbReference>
<dbReference type="InterPro" id="IPR019818">
    <property type="entry name" value="IsoCit/isopropylmalate_DH_CS"/>
</dbReference>
<dbReference type="InterPro" id="IPR024084">
    <property type="entry name" value="IsoPropMal-DH-like_dom"/>
</dbReference>
<dbReference type="InterPro" id="IPR004429">
    <property type="entry name" value="Isopropylmalate_DH"/>
</dbReference>
<dbReference type="NCBIfam" id="TIGR00169">
    <property type="entry name" value="leuB"/>
    <property type="match status" value="1"/>
</dbReference>
<dbReference type="PANTHER" id="PTHR42979">
    <property type="entry name" value="3-ISOPROPYLMALATE DEHYDROGENASE"/>
    <property type="match status" value="1"/>
</dbReference>
<dbReference type="PANTHER" id="PTHR42979:SF1">
    <property type="entry name" value="3-ISOPROPYLMALATE DEHYDROGENASE"/>
    <property type="match status" value="1"/>
</dbReference>
<dbReference type="Pfam" id="PF00180">
    <property type="entry name" value="Iso_dh"/>
    <property type="match status" value="1"/>
</dbReference>
<dbReference type="SMART" id="SM01329">
    <property type="entry name" value="Iso_dh"/>
    <property type="match status" value="1"/>
</dbReference>
<dbReference type="SUPFAM" id="SSF53659">
    <property type="entry name" value="Isocitrate/Isopropylmalate dehydrogenase-like"/>
    <property type="match status" value="1"/>
</dbReference>
<dbReference type="PROSITE" id="PS00470">
    <property type="entry name" value="IDH_IMDH"/>
    <property type="match status" value="1"/>
</dbReference>
<gene>
    <name evidence="1" type="primary">leuB2</name>
    <name type="ordered locus">bll0504</name>
</gene>
<protein>
    <recommendedName>
        <fullName evidence="1">3-isopropylmalate dehydrogenase 2</fullName>
        <ecNumber evidence="1">1.1.1.85</ecNumber>
    </recommendedName>
    <alternativeName>
        <fullName evidence="1">3-IPM-DH 2</fullName>
    </alternativeName>
    <alternativeName>
        <fullName evidence="1">Beta-IPM dehydrogenase 2</fullName>
        <shortName evidence="1">IMDH 2</shortName>
    </alternativeName>
</protein>
<accession>Q89X19</accession>
<proteinExistence type="inferred from homology"/>